<protein>
    <recommendedName>
        <fullName>Pentatricopeptide repeat-containing protein At3g21470</fullName>
    </recommendedName>
</protein>
<keyword id="KW-1185">Reference proteome</keyword>
<keyword id="KW-0677">Repeat</keyword>
<organism>
    <name type="scientific">Arabidopsis thaliana</name>
    <name type="common">Mouse-ear cress</name>
    <dbReference type="NCBI Taxonomy" id="3702"/>
    <lineage>
        <taxon>Eukaryota</taxon>
        <taxon>Viridiplantae</taxon>
        <taxon>Streptophyta</taxon>
        <taxon>Embryophyta</taxon>
        <taxon>Tracheophyta</taxon>
        <taxon>Spermatophyta</taxon>
        <taxon>Magnoliopsida</taxon>
        <taxon>eudicotyledons</taxon>
        <taxon>Gunneridae</taxon>
        <taxon>Pentapetalae</taxon>
        <taxon>rosids</taxon>
        <taxon>malvids</taxon>
        <taxon>Brassicales</taxon>
        <taxon>Brassicaceae</taxon>
        <taxon>Camelineae</taxon>
        <taxon>Arabidopsis</taxon>
    </lineage>
</organism>
<name>PP245_ARATH</name>
<feature type="chain" id="PRO_0000356104" description="Pentatricopeptide repeat-containing protein At3g21470">
    <location>
        <begin position="1"/>
        <end position="523"/>
    </location>
</feature>
<feature type="repeat" description="PPR 1">
    <location>
        <begin position="10"/>
        <end position="43"/>
    </location>
</feature>
<feature type="repeat" description="PPR 2">
    <location>
        <begin position="44"/>
        <end position="79"/>
    </location>
</feature>
<feature type="repeat" description="PPR 3">
    <location>
        <begin position="80"/>
        <end position="114"/>
    </location>
</feature>
<feature type="repeat" description="PPR 4">
    <location>
        <begin position="115"/>
        <end position="141"/>
    </location>
</feature>
<feature type="repeat" description="PPR 5">
    <location>
        <begin position="143"/>
        <end position="173"/>
    </location>
</feature>
<feature type="repeat" description="PPR 6">
    <location>
        <begin position="176"/>
        <end position="210"/>
    </location>
</feature>
<feature type="repeat" description="PPR 7">
    <location>
        <begin position="211"/>
        <end position="237"/>
    </location>
</feature>
<feature type="repeat" description="PPR 8">
    <location>
        <begin position="238"/>
        <end position="272"/>
    </location>
</feature>
<feature type="repeat" description="PPR 9">
    <location>
        <begin position="273"/>
        <end position="307"/>
    </location>
</feature>
<feature type="repeat" description="PPR 10">
    <location>
        <begin position="308"/>
        <end position="338"/>
    </location>
</feature>
<feature type="repeat" description="PPR 11">
    <location>
        <begin position="339"/>
        <end position="373"/>
    </location>
</feature>
<feature type="repeat" description="PPR 12">
    <location>
        <begin position="374"/>
        <end position="408"/>
    </location>
</feature>
<feature type="repeat" description="PPR 13">
    <location>
        <begin position="409"/>
        <end position="439"/>
    </location>
</feature>
<feature type="region of interest" description="Type E motif">
    <location>
        <begin position="444"/>
        <end position="523"/>
    </location>
</feature>
<evidence type="ECO:0000305" key="1"/>
<comment type="similarity">
    <text evidence="1">Belongs to the PPR family. PCMP-E subfamily.</text>
</comment>
<comment type="sequence caution" evidence="1">
    <conflict type="erroneous initiation">
        <sequence resource="EMBL-CDS" id="AAT71952"/>
    </conflict>
</comment>
<comment type="online information" name="Pentatricopeptide repeat proteins">
    <link uri="https://ppr.plantenergy.uwa.edu.au"/>
</comment>
<gene>
    <name type="primary">PCMP-E29</name>
    <name type="ordered locus">At3g21470</name>
    <name type="ORF">MIL23.2</name>
</gene>
<accession>Q9LVF9</accession>
<accession>Q6DBE2</accession>
<proteinExistence type="evidence at transcript level"/>
<dbReference type="EMBL" id="AB019232">
    <property type="protein sequence ID" value="BAB02341.1"/>
    <property type="molecule type" value="Genomic_DNA"/>
</dbReference>
<dbReference type="EMBL" id="CP002686">
    <property type="protein sequence ID" value="AEE76513.1"/>
    <property type="molecule type" value="Genomic_DNA"/>
</dbReference>
<dbReference type="EMBL" id="BT015080">
    <property type="protein sequence ID" value="AAT71952.1"/>
    <property type="status" value="ALT_INIT"/>
    <property type="molecule type" value="mRNA"/>
</dbReference>
<dbReference type="EMBL" id="BT015911">
    <property type="protein sequence ID" value="AAU95447.1"/>
    <property type="molecule type" value="mRNA"/>
</dbReference>
<dbReference type="RefSeq" id="NP_188784.3">
    <property type="nucleotide sequence ID" value="NM_113042.4"/>
</dbReference>
<dbReference type="SMR" id="Q9LVF9"/>
<dbReference type="FunCoup" id="Q9LVF9">
    <property type="interactions" value="302"/>
</dbReference>
<dbReference type="PaxDb" id="3702-AT3G21470.1"/>
<dbReference type="ProteomicsDB" id="249186"/>
<dbReference type="EnsemblPlants" id="AT3G21470.1">
    <property type="protein sequence ID" value="AT3G21470.1"/>
    <property type="gene ID" value="AT3G21470"/>
</dbReference>
<dbReference type="GeneID" id="821701"/>
<dbReference type="Gramene" id="AT3G21470.1">
    <property type="protein sequence ID" value="AT3G21470.1"/>
    <property type="gene ID" value="AT3G21470"/>
</dbReference>
<dbReference type="KEGG" id="ath:AT3G21470"/>
<dbReference type="Araport" id="AT3G21470"/>
<dbReference type="TAIR" id="AT3G21470"/>
<dbReference type="eggNOG" id="KOG4197">
    <property type="taxonomic scope" value="Eukaryota"/>
</dbReference>
<dbReference type="HOGENOM" id="CLU_002706_0_2_1"/>
<dbReference type="InParanoid" id="Q9LVF9"/>
<dbReference type="OMA" id="SQMIGGF"/>
<dbReference type="PhylomeDB" id="Q9LVF9"/>
<dbReference type="PRO" id="PR:Q9LVF9"/>
<dbReference type="Proteomes" id="UP000006548">
    <property type="component" value="Chromosome 3"/>
</dbReference>
<dbReference type="ExpressionAtlas" id="Q9LVF9">
    <property type="expression patterns" value="baseline and differential"/>
</dbReference>
<dbReference type="GO" id="GO:0003723">
    <property type="term" value="F:RNA binding"/>
    <property type="evidence" value="ECO:0007669"/>
    <property type="project" value="InterPro"/>
</dbReference>
<dbReference type="GO" id="GO:0009451">
    <property type="term" value="P:RNA modification"/>
    <property type="evidence" value="ECO:0007669"/>
    <property type="project" value="InterPro"/>
</dbReference>
<dbReference type="FunFam" id="1.25.40.10:FF:000345">
    <property type="entry name" value="Pentatricopeptide repeat-containing protein"/>
    <property type="match status" value="1"/>
</dbReference>
<dbReference type="FunFam" id="1.25.40.10:FF:001549">
    <property type="entry name" value="Pentatricopeptide repeat-containing protein At3g21470"/>
    <property type="match status" value="1"/>
</dbReference>
<dbReference type="Gene3D" id="1.25.40.10">
    <property type="entry name" value="Tetratricopeptide repeat domain"/>
    <property type="match status" value="3"/>
</dbReference>
<dbReference type="InterPro" id="IPR046848">
    <property type="entry name" value="E_motif"/>
</dbReference>
<dbReference type="InterPro" id="IPR002885">
    <property type="entry name" value="Pentatricopeptide_rpt"/>
</dbReference>
<dbReference type="InterPro" id="IPR046960">
    <property type="entry name" value="PPR_At4g14850-like_plant"/>
</dbReference>
<dbReference type="InterPro" id="IPR011990">
    <property type="entry name" value="TPR-like_helical_dom_sf"/>
</dbReference>
<dbReference type="NCBIfam" id="TIGR00756">
    <property type="entry name" value="PPR"/>
    <property type="match status" value="7"/>
</dbReference>
<dbReference type="PANTHER" id="PTHR47926">
    <property type="entry name" value="PENTATRICOPEPTIDE REPEAT-CONTAINING PROTEIN"/>
    <property type="match status" value="1"/>
</dbReference>
<dbReference type="PANTHER" id="PTHR47926:SF484">
    <property type="entry name" value="PENTATRICOPEPTIDE REPEAT-CONTAINING PROTEIN"/>
    <property type="match status" value="1"/>
</dbReference>
<dbReference type="Pfam" id="PF20431">
    <property type="entry name" value="E_motif"/>
    <property type="match status" value="1"/>
</dbReference>
<dbReference type="Pfam" id="PF01535">
    <property type="entry name" value="PPR"/>
    <property type="match status" value="6"/>
</dbReference>
<dbReference type="Pfam" id="PF12854">
    <property type="entry name" value="PPR_1"/>
    <property type="match status" value="1"/>
</dbReference>
<dbReference type="Pfam" id="PF13041">
    <property type="entry name" value="PPR_2"/>
    <property type="match status" value="2"/>
</dbReference>
<dbReference type="PROSITE" id="PS51375">
    <property type="entry name" value="PPR"/>
    <property type="match status" value="12"/>
</dbReference>
<reference key="1">
    <citation type="journal article" date="2000" name="DNA Res.">
        <title>Structural analysis of Arabidopsis thaliana chromosome 3. I. Sequence features of the regions of 4,504,864 bp covered by sixty P1 and TAC clones.</title>
        <authorList>
            <person name="Sato S."/>
            <person name="Nakamura Y."/>
            <person name="Kaneko T."/>
            <person name="Katoh T."/>
            <person name="Asamizu E."/>
            <person name="Tabata S."/>
        </authorList>
    </citation>
    <scope>NUCLEOTIDE SEQUENCE [LARGE SCALE GENOMIC DNA]</scope>
    <source>
        <strain>cv. Columbia</strain>
    </source>
</reference>
<reference key="2">
    <citation type="journal article" date="2017" name="Plant J.">
        <title>Araport11: a complete reannotation of the Arabidopsis thaliana reference genome.</title>
        <authorList>
            <person name="Cheng C.Y."/>
            <person name="Krishnakumar V."/>
            <person name="Chan A.P."/>
            <person name="Thibaud-Nissen F."/>
            <person name="Schobel S."/>
            <person name="Town C.D."/>
        </authorList>
    </citation>
    <scope>GENOME REANNOTATION</scope>
    <source>
        <strain>cv. Columbia</strain>
    </source>
</reference>
<reference key="3">
    <citation type="submission" date="2004-10" db="EMBL/GenBank/DDBJ databases">
        <title>Arabidopsis ORF clones.</title>
        <authorList>
            <person name="Cheuk R.F."/>
            <person name="Chen H."/>
            <person name="Kim C.J."/>
            <person name="Shinn P."/>
            <person name="Ecker J.R."/>
        </authorList>
    </citation>
    <scope>NUCLEOTIDE SEQUENCE [LARGE SCALE MRNA] OF 44-523</scope>
    <source>
        <strain>cv. Columbia</strain>
    </source>
</reference>
<reference key="4">
    <citation type="journal article" date="2000" name="Plant Mol. Biol.">
        <title>In Arabidopsis thaliana, 1% of the genome codes for a novel protein family unique to plants.</title>
        <authorList>
            <person name="Aubourg S."/>
            <person name="Boudet N."/>
            <person name="Kreis M."/>
            <person name="Lecharny A."/>
        </authorList>
    </citation>
    <scope>GENE FAMILY</scope>
</reference>
<reference key="5">
    <citation type="journal article" date="2004" name="Plant Cell">
        <title>Genome-wide analysis of Arabidopsis pentatricopeptide repeat proteins reveals their essential role in organelle biogenesis.</title>
        <authorList>
            <person name="Lurin C."/>
            <person name="Andres C."/>
            <person name="Aubourg S."/>
            <person name="Bellaoui M."/>
            <person name="Bitton F."/>
            <person name="Bruyere C."/>
            <person name="Caboche M."/>
            <person name="Debast C."/>
            <person name="Gualberto J."/>
            <person name="Hoffmann B."/>
            <person name="Lecharny A."/>
            <person name="Le Ret M."/>
            <person name="Martin-Magniette M.-L."/>
            <person name="Mireau H."/>
            <person name="Peeters N."/>
            <person name="Renou J.-P."/>
            <person name="Szurek B."/>
            <person name="Taconnat L."/>
            <person name="Small I."/>
        </authorList>
    </citation>
    <scope>GENE FAMILY</scope>
</reference>
<sequence length="523" mass="58227">MNLEEHLSLGEFHVSNLIKNHISRGSPIQALVLYGGIRRRGVYFPGWVPLILRACACVVPRVVLGKLLHSESIKFGVCSDVMVGSSLISMYGKCGCVVSARKVFDEMPERNVATWNAMIGGYMSNGDAVLASGLFEEISVCRNTVTWIEMIKGYGKRIEIEKARELFERMPFELKNVKAWSVMLGVYVNNRKMEDARKFFEDIPEKNAFVWSLMMSGYFRIGDVHEARAIFYRVFARDLVIWNTLIAGYAQNGYSDDAIDAFFNMQGEGYEPDAVTVSSILSACAQSGRLDVGREVHSLINHRGIELNQFVSNALIDMYAKCGDLENATSVFESISVRSVACCNSMISCLAIHGKGKEALEMFSTMESLDLKPDEITFIAVLTACVHGGFLMEGLKIFSEMKTQDVKPNVKHFGCLIHLLGRSGKLKEAYRLVKEMHVKPNDTVLGALLGACKVHMDTEMAEQVMKIIETAGSITNSYSENHLASISNLYAHTERWQTAEALRVEMEKRGLEKSPGLSSLVLT</sequence>